<organism>
    <name type="scientific">Magnetococcus marinus (strain ATCC BAA-1437 / JCM 17883 / MC-1)</name>
    <dbReference type="NCBI Taxonomy" id="156889"/>
    <lineage>
        <taxon>Bacteria</taxon>
        <taxon>Pseudomonadati</taxon>
        <taxon>Pseudomonadota</taxon>
        <taxon>Alphaproteobacteria</taxon>
        <taxon>Magnetococcales</taxon>
        <taxon>Magnetococcaceae</taxon>
        <taxon>Magnetococcus</taxon>
    </lineage>
</organism>
<protein>
    <recommendedName>
        <fullName evidence="1">NAD kinase</fullName>
        <ecNumber evidence="1">2.7.1.23</ecNumber>
    </recommendedName>
    <alternativeName>
        <fullName evidence="1">ATP-dependent NAD kinase</fullName>
    </alternativeName>
</protein>
<comment type="function">
    <text evidence="1">Involved in the regulation of the intracellular balance of NAD and NADP, and is a key enzyme in the biosynthesis of NADP. Catalyzes specifically the phosphorylation on 2'-hydroxyl of the adenosine moiety of NAD to yield NADP.</text>
</comment>
<comment type="catalytic activity">
    <reaction evidence="1">
        <text>NAD(+) + ATP = ADP + NADP(+) + H(+)</text>
        <dbReference type="Rhea" id="RHEA:18629"/>
        <dbReference type="ChEBI" id="CHEBI:15378"/>
        <dbReference type="ChEBI" id="CHEBI:30616"/>
        <dbReference type="ChEBI" id="CHEBI:57540"/>
        <dbReference type="ChEBI" id="CHEBI:58349"/>
        <dbReference type="ChEBI" id="CHEBI:456216"/>
        <dbReference type="EC" id="2.7.1.23"/>
    </reaction>
</comment>
<comment type="cofactor">
    <cofactor evidence="1">
        <name>a divalent metal cation</name>
        <dbReference type="ChEBI" id="CHEBI:60240"/>
    </cofactor>
</comment>
<comment type="subcellular location">
    <subcellularLocation>
        <location evidence="1">Cytoplasm</location>
    </subcellularLocation>
</comment>
<comment type="similarity">
    <text evidence="1">Belongs to the NAD kinase family.</text>
</comment>
<reference key="1">
    <citation type="journal article" date="2009" name="Appl. Environ. Microbiol.">
        <title>Complete genome sequence of the chemolithoautotrophic marine magnetotactic coccus strain MC-1.</title>
        <authorList>
            <person name="Schubbe S."/>
            <person name="Williams T.J."/>
            <person name="Xie G."/>
            <person name="Kiss H.E."/>
            <person name="Brettin T.S."/>
            <person name="Martinez D."/>
            <person name="Ross C.A."/>
            <person name="Schuler D."/>
            <person name="Cox B.L."/>
            <person name="Nealson K.H."/>
            <person name="Bazylinski D.A."/>
        </authorList>
    </citation>
    <scope>NUCLEOTIDE SEQUENCE [LARGE SCALE GENOMIC DNA]</scope>
    <source>
        <strain>ATCC BAA-1437 / JCM 17883 / MC-1</strain>
    </source>
</reference>
<proteinExistence type="inferred from homology"/>
<accession>A0L8H9</accession>
<gene>
    <name evidence="1" type="primary">nadK</name>
    <name type="ordered locus">Mmc1_1764</name>
</gene>
<sequence length="303" mass="33466">MNSIGLVTKLSDPMAIRATSELTEWLNKQHRRVTVTAEAAKAANISPKLAAIKPLEDIGEGQDLVIVLGGDGTFIGAARDVLRWKVPVLGVNMGRLGFLTEVSYDEMYDNLKEVFAGHYNVEDRMMLTAFIRRESGEVLSHHVLNDVVAHKGHLARMMEFQVSINGQHVFTSRADGLIVATPTGSTGYSLSAGGPIIHPRLDTIIINPICPHTLSNRPIAVPGDGQISFRLTQNEPDRLLTLDGQTGVPLLDGDEIVIRKSDRSLRVIHSPDRNYYDILRKKLHWAETVGTKRDLSLRPADDR</sequence>
<evidence type="ECO:0000255" key="1">
    <source>
        <dbReference type="HAMAP-Rule" id="MF_00361"/>
    </source>
</evidence>
<feature type="chain" id="PRO_1000079500" description="NAD kinase">
    <location>
        <begin position="1"/>
        <end position="303"/>
    </location>
</feature>
<feature type="active site" description="Proton acceptor" evidence="1">
    <location>
        <position position="71"/>
    </location>
</feature>
<feature type="binding site" evidence="1">
    <location>
        <begin position="71"/>
        <end position="72"/>
    </location>
    <ligand>
        <name>NAD(+)</name>
        <dbReference type="ChEBI" id="CHEBI:57540"/>
    </ligand>
</feature>
<feature type="binding site" evidence="1">
    <location>
        <begin position="145"/>
        <end position="146"/>
    </location>
    <ligand>
        <name>NAD(+)</name>
        <dbReference type="ChEBI" id="CHEBI:57540"/>
    </ligand>
</feature>
<feature type="binding site" evidence="1">
    <location>
        <position position="156"/>
    </location>
    <ligand>
        <name>NAD(+)</name>
        <dbReference type="ChEBI" id="CHEBI:57540"/>
    </ligand>
</feature>
<feature type="binding site" evidence="1">
    <location>
        <position position="173"/>
    </location>
    <ligand>
        <name>NAD(+)</name>
        <dbReference type="ChEBI" id="CHEBI:57540"/>
    </ligand>
</feature>
<feature type="binding site" evidence="1">
    <location>
        <position position="175"/>
    </location>
    <ligand>
        <name>NAD(+)</name>
        <dbReference type="ChEBI" id="CHEBI:57540"/>
    </ligand>
</feature>
<feature type="binding site" evidence="1">
    <location>
        <begin position="186"/>
        <end position="191"/>
    </location>
    <ligand>
        <name>NAD(+)</name>
        <dbReference type="ChEBI" id="CHEBI:57540"/>
    </ligand>
</feature>
<feature type="binding site" evidence="1">
    <location>
        <position position="245"/>
    </location>
    <ligand>
        <name>NAD(+)</name>
        <dbReference type="ChEBI" id="CHEBI:57540"/>
    </ligand>
</feature>
<keyword id="KW-0067">ATP-binding</keyword>
<keyword id="KW-0963">Cytoplasm</keyword>
<keyword id="KW-0418">Kinase</keyword>
<keyword id="KW-0520">NAD</keyword>
<keyword id="KW-0521">NADP</keyword>
<keyword id="KW-0547">Nucleotide-binding</keyword>
<keyword id="KW-1185">Reference proteome</keyword>
<keyword id="KW-0808">Transferase</keyword>
<dbReference type="EC" id="2.7.1.23" evidence="1"/>
<dbReference type="EMBL" id="CP000471">
    <property type="protein sequence ID" value="ABK44272.1"/>
    <property type="molecule type" value="Genomic_DNA"/>
</dbReference>
<dbReference type="RefSeq" id="WP_011713419.1">
    <property type="nucleotide sequence ID" value="NC_008576.1"/>
</dbReference>
<dbReference type="SMR" id="A0L8H9"/>
<dbReference type="STRING" id="156889.Mmc1_1764"/>
<dbReference type="KEGG" id="mgm:Mmc1_1764"/>
<dbReference type="eggNOG" id="COG0061">
    <property type="taxonomic scope" value="Bacteria"/>
</dbReference>
<dbReference type="HOGENOM" id="CLU_008831_0_1_5"/>
<dbReference type="OrthoDB" id="9774737at2"/>
<dbReference type="Proteomes" id="UP000002586">
    <property type="component" value="Chromosome"/>
</dbReference>
<dbReference type="GO" id="GO:0005737">
    <property type="term" value="C:cytoplasm"/>
    <property type="evidence" value="ECO:0007669"/>
    <property type="project" value="UniProtKB-SubCell"/>
</dbReference>
<dbReference type="GO" id="GO:0005524">
    <property type="term" value="F:ATP binding"/>
    <property type="evidence" value="ECO:0007669"/>
    <property type="project" value="UniProtKB-KW"/>
</dbReference>
<dbReference type="GO" id="GO:0046872">
    <property type="term" value="F:metal ion binding"/>
    <property type="evidence" value="ECO:0007669"/>
    <property type="project" value="UniProtKB-UniRule"/>
</dbReference>
<dbReference type="GO" id="GO:0051287">
    <property type="term" value="F:NAD binding"/>
    <property type="evidence" value="ECO:0007669"/>
    <property type="project" value="UniProtKB-ARBA"/>
</dbReference>
<dbReference type="GO" id="GO:0003951">
    <property type="term" value="F:NAD+ kinase activity"/>
    <property type="evidence" value="ECO:0007669"/>
    <property type="project" value="UniProtKB-UniRule"/>
</dbReference>
<dbReference type="GO" id="GO:0019674">
    <property type="term" value="P:NAD metabolic process"/>
    <property type="evidence" value="ECO:0007669"/>
    <property type="project" value="InterPro"/>
</dbReference>
<dbReference type="GO" id="GO:0006741">
    <property type="term" value="P:NADP biosynthetic process"/>
    <property type="evidence" value="ECO:0007669"/>
    <property type="project" value="UniProtKB-UniRule"/>
</dbReference>
<dbReference type="FunFam" id="2.60.200.30:FF:000009">
    <property type="entry name" value="Poly(P)/ATP NAD kinase"/>
    <property type="match status" value="1"/>
</dbReference>
<dbReference type="Gene3D" id="3.40.50.10330">
    <property type="entry name" value="Probable inorganic polyphosphate/atp-NAD kinase, domain 1"/>
    <property type="match status" value="1"/>
</dbReference>
<dbReference type="Gene3D" id="2.60.200.30">
    <property type="entry name" value="Probable inorganic polyphosphate/atp-NAD kinase, domain 2"/>
    <property type="match status" value="1"/>
</dbReference>
<dbReference type="HAMAP" id="MF_00361">
    <property type="entry name" value="NAD_kinase"/>
    <property type="match status" value="1"/>
</dbReference>
<dbReference type="InterPro" id="IPR017438">
    <property type="entry name" value="ATP-NAD_kinase_N"/>
</dbReference>
<dbReference type="InterPro" id="IPR017437">
    <property type="entry name" value="ATP-NAD_kinase_PpnK-typ_C"/>
</dbReference>
<dbReference type="InterPro" id="IPR016064">
    <property type="entry name" value="NAD/diacylglycerol_kinase_sf"/>
</dbReference>
<dbReference type="InterPro" id="IPR002504">
    <property type="entry name" value="NADK"/>
</dbReference>
<dbReference type="PANTHER" id="PTHR20275">
    <property type="entry name" value="NAD KINASE"/>
    <property type="match status" value="1"/>
</dbReference>
<dbReference type="PANTHER" id="PTHR20275:SF0">
    <property type="entry name" value="NAD KINASE"/>
    <property type="match status" value="1"/>
</dbReference>
<dbReference type="Pfam" id="PF01513">
    <property type="entry name" value="NAD_kinase"/>
    <property type="match status" value="1"/>
</dbReference>
<dbReference type="Pfam" id="PF20143">
    <property type="entry name" value="NAD_kinase_C"/>
    <property type="match status" value="1"/>
</dbReference>
<dbReference type="SUPFAM" id="SSF111331">
    <property type="entry name" value="NAD kinase/diacylglycerol kinase-like"/>
    <property type="match status" value="1"/>
</dbReference>
<name>NADK_MAGMM</name>